<gene>
    <name evidence="1" type="primary">murI</name>
    <name type="ordered locus">BT_1157</name>
</gene>
<dbReference type="EC" id="5.1.1.3" evidence="1"/>
<dbReference type="EMBL" id="AM260525">
    <property type="protein sequence ID" value="CAK01529.1"/>
    <property type="molecule type" value="Genomic_DNA"/>
</dbReference>
<dbReference type="RefSeq" id="WP_012231732.1">
    <property type="nucleotide sequence ID" value="NC_010161.1"/>
</dbReference>
<dbReference type="SMR" id="A9IU96"/>
<dbReference type="KEGG" id="btr:BT_1157"/>
<dbReference type="eggNOG" id="COG0796">
    <property type="taxonomic scope" value="Bacteria"/>
</dbReference>
<dbReference type="HOGENOM" id="CLU_052344_2_0_5"/>
<dbReference type="UniPathway" id="UPA00219"/>
<dbReference type="Proteomes" id="UP000001592">
    <property type="component" value="Chromosome"/>
</dbReference>
<dbReference type="GO" id="GO:0008881">
    <property type="term" value="F:glutamate racemase activity"/>
    <property type="evidence" value="ECO:0007669"/>
    <property type="project" value="UniProtKB-UniRule"/>
</dbReference>
<dbReference type="GO" id="GO:0071555">
    <property type="term" value="P:cell wall organization"/>
    <property type="evidence" value="ECO:0007669"/>
    <property type="project" value="UniProtKB-KW"/>
</dbReference>
<dbReference type="GO" id="GO:0009252">
    <property type="term" value="P:peptidoglycan biosynthetic process"/>
    <property type="evidence" value="ECO:0007669"/>
    <property type="project" value="UniProtKB-UniRule"/>
</dbReference>
<dbReference type="GO" id="GO:0008360">
    <property type="term" value="P:regulation of cell shape"/>
    <property type="evidence" value="ECO:0007669"/>
    <property type="project" value="UniProtKB-KW"/>
</dbReference>
<dbReference type="Gene3D" id="3.40.50.1860">
    <property type="match status" value="2"/>
</dbReference>
<dbReference type="HAMAP" id="MF_00258">
    <property type="entry name" value="Glu_racemase"/>
    <property type="match status" value="1"/>
</dbReference>
<dbReference type="InterPro" id="IPR015942">
    <property type="entry name" value="Asp/Glu/hydantoin_racemase"/>
</dbReference>
<dbReference type="InterPro" id="IPR001920">
    <property type="entry name" value="Asp/Glu_race"/>
</dbReference>
<dbReference type="InterPro" id="IPR033134">
    <property type="entry name" value="Asp/Glu_racemase_AS_2"/>
</dbReference>
<dbReference type="InterPro" id="IPR004391">
    <property type="entry name" value="Glu_race"/>
</dbReference>
<dbReference type="NCBIfam" id="TIGR00067">
    <property type="entry name" value="glut_race"/>
    <property type="match status" value="1"/>
</dbReference>
<dbReference type="PANTHER" id="PTHR21198">
    <property type="entry name" value="GLUTAMATE RACEMASE"/>
    <property type="match status" value="1"/>
</dbReference>
<dbReference type="PANTHER" id="PTHR21198:SF2">
    <property type="entry name" value="GLUTAMATE RACEMASE"/>
    <property type="match status" value="1"/>
</dbReference>
<dbReference type="Pfam" id="PF01177">
    <property type="entry name" value="Asp_Glu_race"/>
    <property type="match status" value="1"/>
</dbReference>
<dbReference type="SUPFAM" id="SSF53681">
    <property type="entry name" value="Aspartate/glutamate racemase"/>
    <property type="match status" value="2"/>
</dbReference>
<dbReference type="PROSITE" id="PS00924">
    <property type="entry name" value="ASP_GLU_RACEMASE_2"/>
    <property type="match status" value="1"/>
</dbReference>
<keyword id="KW-0133">Cell shape</keyword>
<keyword id="KW-0961">Cell wall biogenesis/degradation</keyword>
<keyword id="KW-0413">Isomerase</keyword>
<keyword id="KW-0573">Peptidoglycan synthesis</keyword>
<reference key="1">
    <citation type="journal article" date="2007" name="Nat. Genet.">
        <title>Genomic analysis of Bartonella identifies type IV secretion systems as host adaptability factors.</title>
        <authorList>
            <person name="Saenz H.L."/>
            <person name="Engel P."/>
            <person name="Stoeckli M.C."/>
            <person name="Lanz C."/>
            <person name="Raddatz G."/>
            <person name="Vayssier-Taussat M."/>
            <person name="Birtles R."/>
            <person name="Schuster S.C."/>
            <person name="Dehio C."/>
        </authorList>
    </citation>
    <scope>NUCLEOTIDE SEQUENCE [LARGE SCALE GENOMIC DNA]</scope>
    <source>
        <strain>CIP 105476 / IBS 506</strain>
    </source>
</reference>
<protein>
    <recommendedName>
        <fullName evidence="1">Glutamate racemase</fullName>
        <ecNumber evidence="1">5.1.1.3</ecNumber>
    </recommendedName>
</protein>
<organism>
    <name type="scientific">Bartonella tribocorum (strain CIP 105476 / IBS 506)</name>
    <dbReference type="NCBI Taxonomy" id="382640"/>
    <lineage>
        <taxon>Bacteria</taxon>
        <taxon>Pseudomonadati</taxon>
        <taxon>Pseudomonadota</taxon>
        <taxon>Alphaproteobacteria</taxon>
        <taxon>Hyphomicrobiales</taxon>
        <taxon>Bartonellaceae</taxon>
        <taxon>Bartonella</taxon>
    </lineage>
</organism>
<proteinExistence type="inferred from homology"/>
<accession>A9IU96</accession>
<sequence>MDERPVLFFDSGIGGLTVLREARVLIPEIQFIYVADDAGFPYGNWEENILKEHILNIFTNLLTRYNPALCVIACNTVSTLMMADLRQKFPHVPFVGTVPAIKSAAEQTKSGFISVLATPGTVKRAYTNELINSFAGQCHVQLVGSEKLAGFAEDHLRGKTIDSEALRKEILPCFVKKNGKCTDVIVLACTHYPFLINFFREQALWSVEWIDPAKAIAKHIRSLLPLSEKIHQKPIKKYQDFALLTSKNITASTEHLLKGFGLKLMKRVDFRIRDQ</sequence>
<name>MURI_BART1</name>
<evidence type="ECO:0000255" key="1">
    <source>
        <dbReference type="HAMAP-Rule" id="MF_00258"/>
    </source>
</evidence>
<comment type="function">
    <text evidence="1">Provides the (R)-glutamate required for cell wall biosynthesis.</text>
</comment>
<comment type="catalytic activity">
    <reaction evidence="1">
        <text>L-glutamate = D-glutamate</text>
        <dbReference type="Rhea" id="RHEA:12813"/>
        <dbReference type="ChEBI" id="CHEBI:29985"/>
        <dbReference type="ChEBI" id="CHEBI:29986"/>
        <dbReference type="EC" id="5.1.1.3"/>
    </reaction>
</comment>
<comment type="pathway">
    <text evidence="1">Cell wall biogenesis; peptidoglycan biosynthesis.</text>
</comment>
<comment type="similarity">
    <text evidence="1">Belongs to the aspartate/glutamate racemases family.</text>
</comment>
<feature type="chain" id="PRO_1000078552" description="Glutamate racemase">
    <location>
        <begin position="1"/>
        <end position="275"/>
    </location>
</feature>
<feature type="active site" description="Proton donor/acceptor" evidence="1">
    <location>
        <position position="74"/>
    </location>
</feature>
<feature type="active site" description="Proton donor/acceptor" evidence="1">
    <location>
        <position position="189"/>
    </location>
</feature>
<feature type="binding site" evidence="1">
    <location>
        <begin position="10"/>
        <end position="11"/>
    </location>
    <ligand>
        <name>substrate</name>
    </ligand>
</feature>
<feature type="binding site" evidence="1">
    <location>
        <begin position="42"/>
        <end position="43"/>
    </location>
    <ligand>
        <name>substrate</name>
    </ligand>
</feature>
<feature type="binding site" evidence="1">
    <location>
        <begin position="75"/>
        <end position="76"/>
    </location>
    <ligand>
        <name>substrate</name>
    </ligand>
</feature>
<feature type="binding site" evidence="1">
    <location>
        <begin position="190"/>
        <end position="191"/>
    </location>
    <ligand>
        <name>substrate</name>
    </ligand>
</feature>